<comment type="function">
    <text evidence="1">Part of the ABC transporter complex LsrABCD involved in autoinducer 2 (AI-2) import. Binds AI-2 and delivers it to the LsrC and LsrD permeases (By similarity).</text>
</comment>
<comment type="subunit">
    <text evidence="1">The complex is composed of two ATP-binding proteins (LsrA), two transmembrane proteins (LsrC and LsrD) and a solute-binding protein (LsrB).</text>
</comment>
<comment type="subcellular location">
    <subcellularLocation>
        <location evidence="3">Periplasm</location>
    </subcellularLocation>
</comment>
<comment type="similarity">
    <text evidence="3">Belongs to the bacterial solute-binding protein 2 family.</text>
</comment>
<proteinExistence type="inferred from homology"/>
<accession>Q1C135</accession>
<sequence>MRTQRLKKLALVCALGFACITTAQAAERIAFIPKLVGVGFFTSGGKGAVDAGKALGVDVTYDGPTEPSVSGQVQLINNFVNQGYNAIVVSAVSPDGLCPALKRAMQRGVKILTWDSDTKPECRSVYINQGTPNQLGSMLVDMAANQVKKEQAKVAFFYSSPTVTDQNQWVNEAKKKIQQEHPGWEIVTTQFGYNDATKSLQTAEGILKAYADLDAIIAPDANALPAAAQAAENLKRANVAIVGFSTPNVMRPYVERGTVKEFGLWDVVNQGKISVYVANEMLKKGDLNVGDKIDIPNIGVVEVSPNRVQGYDYEAKGNGIVLLPQRVIFTKENISKYDF</sequence>
<name>LSRB_YERPA</name>
<feature type="signal peptide" evidence="2">
    <location>
        <begin position="1"/>
        <end position="25"/>
    </location>
</feature>
<feature type="chain" id="PRO_5000116340" description="Autoinducer 2-binding protein LsrB">
    <location>
        <begin position="26"/>
        <end position="339"/>
    </location>
</feature>
<gene>
    <name type="primary">lsrB</name>
    <name type="ordered locus">YPA_3876</name>
</gene>
<dbReference type="EMBL" id="CP000308">
    <property type="protein sequence ID" value="ABG15837.1"/>
    <property type="molecule type" value="Genomic_DNA"/>
</dbReference>
<dbReference type="RefSeq" id="WP_002209189.1">
    <property type="nucleotide sequence ID" value="NZ_CP009906.1"/>
</dbReference>
<dbReference type="SMR" id="Q1C135"/>
<dbReference type="GeneID" id="57974201"/>
<dbReference type="KEGG" id="ypa:YPA_3876"/>
<dbReference type="Proteomes" id="UP000001971">
    <property type="component" value="Chromosome"/>
</dbReference>
<dbReference type="GO" id="GO:0043190">
    <property type="term" value="C:ATP-binding cassette (ABC) transporter complex"/>
    <property type="evidence" value="ECO:0007669"/>
    <property type="project" value="InterPro"/>
</dbReference>
<dbReference type="GO" id="GO:0030288">
    <property type="term" value="C:outer membrane-bounded periplasmic space"/>
    <property type="evidence" value="ECO:0007669"/>
    <property type="project" value="TreeGrafter"/>
</dbReference>
<dbReference type="GO" id="GO:0030246">
    <property type="term" value="F:carbohydrate binding"/>
    <property type="evidence" value="ECO:0007669"/>
    <property type="project" value="TreeGrafter"/>
</dbReference>
<dbReference type="CDD" id="cd20003">
    <property type="entry name" value="PBP1_LsrB_Quorum_Sensing"/>
    <property type="match status" value="1"/>
</dbReference>
<dbReference type="Gene3D" id="3.40.50.2300">
    <property type="match status" value="2"/>
</dbReference>
<dbReference type="InterPro" id="IPR050555">
    <property type="entry name" value="Bact_Solute-Bind_Prot2"/>
</dbReference>
<dbReference type="InterPro" id="IPR030159">
    <property type="entry name" value="LsrB"/>
</dbReference>
<dbReference type="InterPro" id="IPR028082">
    <property type="entry name" value="Peripla_BP_I"/>
</dbReference>
<dbReference type="InterPro" id="IPR025997">
    <property type="entry name" value="SBP_2_dom"/>
</dbReference>
<dbReference type="NCBIfam" id="NF011937">
    <property type="entry name" value="PRK15408.1"/>
    <property type="match status" value="1"/>
</dbReference>
<dbReference type="PANTHER" id="PTHR30036:SF7">
    <property type="entry name" value="ABC TRANSPORTER PERIPLASMIC-BINDING PROTEIN YPHF"/>
    <property type="match status" value="1"/>
</dbReference>
<dbReference type="PANTHER" id="PTHR30036">
    <property type="entry name" value="D-XYLOSE-BINDING PERIPLASMIC PROTEIN"/>
    <property type="match status" value="1"/>
</dbReference>
<dbReference type="Pfam" id="PF13407">
    <property type="entry name" value="Peripla_BP_4"/>
    <property type="match status" value="1"/>
</dbReference>
<dbReference type="SUPFAM" id="SSF53822">
    <property type="entry name" value="Periplasmic binding protein-like I"/>
    <property type="match status" value="1"/>
</dbReference>
<evidence type="ECO:0000250" key="1"/>
<evidence type="ECO:0000255" key="2"/>
<evidence type="ECO:0000305" key="3"/>
<protein>
    <recommendedName>
        <fullName>Autoinducer 2-binding protein LsrB</fullName>
        <shortName>AI-2-binding protein LsrB</shortName>
    </recommendedName>
</protein>
<keyword id="KW-0574">Periplasm</keyword>
<keyword id="KW-0732">Signal</keyword>
<organism>
    <name type="scientific">Yersinia pestis bv. Antiqua (strain Antiqua)</name>
    <dbReference type="NCBI Taxonomy" id="360102"/>
    <lineage>
        <taxon>Bacteria</taxon>
        <taxon>Pseudomonadati</taxon>
        <taxon>Pseudomonadota</taxon>
        <taxon>Gammaproteobacteria</taxon>
        <taxon>Enterobacterales</taxon>
        <taxon>Yersiniaceae</taxon>
        <taxon>Yersinia</taxon>
    </lineage>
</organism>
<reference key="1">
    <citation type="journal article" date="2006" name="J. Bacteriol.">
        <title>Complete genome sequence of Yersinia pestis strains Antiqua and Nepal516: evidence of gene reduction in an emerging pathogen.</title>
        <authorList>
            <person name="Chain P.S.G."/>
            <person name="Hu P."/>
            <person name="Malfatti S.A."/>
            <person name="Radnedge L."/>
            <person name="Larimer F."/>
            <person name="Vergez L.M."/>
            <person name="Worsham P."/>
            <person name="Chu M.C."/>
            <person name="Andersen G.L."/>
        </authorList>
    </citation>
    <scope>NUCLEOTIDE SEQUENCE [LARGE SCALE GENOMIC DNA]</scope>
    <source>
        <strain>Antiqua</strain>
    </source>
</reference>